<name>ZAPE_ECO57</name>
<sequence>MQSVTPTSQYLKALNEGSHQPDDVQKEAVSRLEIIYQELINSTPPAPRTSGLMARVGKLWGKREDTKHTPVRGLYMWGGVGRGKTWLMDLFYQSLPGERKQRLHFHRFMLRVHEELTALQGQTDPLEIIADRFKAETDVLCFDEFFVSDITDAMLLGGLMKALFARGITLVATSNIPPDELYRNGLQRARFLPAIDAIKQHCDVMNVDAGVDYRLRTLTQAHLWLSPLHDETRAQMDKLWLALAGGKRENSPTLEINHRPLATMGVENQTLAVSFTTLCVDARSQHDYIALSRLFHTVMLFDVPVMTRLMESEARRFIALVDEFYERHVKLVVSAEVPLYEIYQGDRLKFEFQRCLSRLQEMQSEEYLKREHLAG</sequence>
<reference key="1">
    <citation type="journal article" date="2001" name="Nature">
        <title>Genome sequence of enterohaemorrhagic Escherichia coli O157:H7.</title>
        <authorList>
            <person name="Perna N.T."/>
            <person name="Plunkett G. III"/>
            <person name="Burland V."/>
            <person name="Mau B."/>
            <person name="Glasner J.D."/>
            <person name="Rose D.J."/>
            <person name="Mayhew G.F."/>
            <person name="Evans P.S."/>
            <person name="Gregor J."/>
            <person name="Kirkpatrick H.A."/>
            <person name="Posfai G."/>
            <person name="Hackett J."/>
            <person name="Klink S."/>
            <person name="Boutin A."/>
            <person name="Shao Y."/>
            <person name="Miller L."/>
            <person name="Grotbeck E.J."/>
            <person name="Davis N.W."/>
            <person name="Lim A."/>
            <person name="Dimalanta E.T."/>
            <person name="Potamousis K."/>
            <person name="Apodaca J."/>
            <person name="Anantharaman T.S."/>
            <person name="Lin J."/>
            <person name="Yen G."/>
            <person name="Schwartz D.C."/>
            <person name="Welch R.A."/>
            <person name="Blattner F.R."/>
        </authorList>
    </citation>
    <scope>NUCLEOTIDE SEQUENCE [LARGE SCALE GENOMIC DNA]</scope>
    <source>
        <strain>O157:H7 / EDL933 / ATCC 700927 / EHEC</strain>
    </source>
</reference>
<reference key="2">
    <citation type="journal article" date="2001" name="DNA Res.">
        <title>Complete genome sequence of enterohemorrhagic Escherichia coli O157:H7 and genomic comparison with a laboratory strain K-12.</title>
        <authorList>
            <person name="Hayashi T."/>
            <person name="Makino K."/>
            <person name="Ohnishi M."/>
            <person name="Kurokawa K."/>
            <person name="Ishii K."/>
            <person name="Yokoyama K."/>
            <person name="Han C.-G."/>
            <person name="Ohtsubo E."/>
            <person name="Nakayama K."/>
            <person name="Murata T."/>
            <person name="Tanaka M."/>
            <person name="Tobe T."/>
            <person name="Iida T."/>
            <person name="Takami H."/>
            <person name="Honda T."/>
            <person name="Sasakawa C."/>
            <person name="Ogasawara N."/>
            <person name="Yasunaga T."/>
            <person name="Kuhara S."/>
            <person name="Shiba T."/>
            <person name="Hattori M."/>
            <person name="Shinagawa H."/>
        </authorList>
    </citation>
    <scope>NUCLEOTIDE SEQUENCE [LARGE SCALE GENOMIC DNA]</scope>
    <source>
        <strain>O157:H7 / Sakai / RIMD 0509952 / EHEC</strain>
    </source>
</reference>
<accession>P64613</accession>
<accession>P46442</accession>
<evidence type="ECO:0000255" key="1">
    <source>
        <dbReference type="HAMAP-Rule" id="MF_01919"/>
    </source>
</evidence>
<proteinExistence type="inferred from homology"/>
<keyword id="KW-0067">ATP-binding</keyword>
<keyword id="KW-0131">Cell cycle</keyword>
<keyword id="KW-0132">Cell division</keyword>
<keyword id="KW-0963">Cytoplasm</keyword>
<keyword id="KW-0378">Hydrolase</keyword>
<keyword id="KW-0547">Nucleotide-binding</keyword>
<keyword id="KW-1185">Reference proteome</keyword>
<feature type="chain" id="PRO_0000169488" description="Cell division protein ZapE">
    <location>
        <begin position="1"/>
        <end position="375"/>
    </location>
</feature>
<feature type="binding site" evidence="1">
    <location>
        <begin position="78"/>
        <end position="85"/>
    </location>
    <ligand>
        <name>ATP</name>
        <dbReference type="ChEBI" id="CHEBI:30616"/>
    </ligand>
</feature>
<gene>
    <name evidence="1" type="primary">zapE</name>
    <name type="synonym">yhcM</name>
    <name type="ordered locus">Z4591</name>
    <name type="ordered locus">ECs4105</name>
</gene>
<dbReference type="EMBL" id="AE005174">
    <property type="protein sequence ID" value="AAG58360.1"/>
    <property type="molecule type" value="Genomic_DNA"/>
</dbReference>
<dbReference type="EMBL" id="BA000007">
    <property type="protein sequence ID" value="BAB37528.1"/>
    <property type="molecule type" value="Genomic_DNA"/>
</dbReference>
<dbReference type="PIR" id="A91142">
    <property type="entry name" value="A91142"/>
</dbReference>
<dbReference type="PIR" id="D85987">
    <property type="entry name" value="D85987"/>
</dbReference>
<dbReference type="RefSeq" id="NP_312132.1">
    <property type="nucleotide sequence ID" value="NC_002695.1"/>
</dbReference>
<dbReference type="RefSeq" id="WP_001192332.1">
    <property type="nucleotide sequence ID" value="NZ_VOAI01000014.1"/>
</dbReference>
<dbReference type="SMR" id="P64613"/>
<dbReference type="STRING" id="155864.Z4591"/>
<dbReference type="GeneID" id="75173400"/>
<dbReference type="GeneID" id="916046"/>
<dbReference type="KEGG" id="ece:Z4591"/>
<dbReference type="KEGG" id="ecs:ECs_4105"/>
<dbReference type="PATRIC" id="fig|386585.9.peg.4286"/>
<dbReference type="eggNOG" id="COG1485">
    <property type="taxonomic scope" value="Bacteria"/>
</dbReference>
<dbReference type="HOGENOM" id="CLU_008681_0_4_6"/>
<dbReference type="OMA" id="ARRFINM"/>
<dbReference type="Proteomes" id="UP000000558">
    <property type="component" value="Chromosome"/>
</dbReference>
<dbReference type="Proteomes" id="UP000002519">
    <property type="component" value="Chromosome"/>
</dbReference>
<dbReference type="GO" id="GO:0032153">
    <property type="term" value="C:cell division site"/>
    <property type="evidence" value="ECO:0007669"/>
    <property type="project" value="TreeGrafter"/>
</dbReference>
<dbReference type="GO" id="GO:0005737">
    <property type="term" value="C:cytoplasm"/>
    <property type="evidence" value="ECO:0007669"/>
    <property type="project" value="UniProtKB-SubCell"/>
</dbReference>
<dbReference type="GO" id="GO:0005524">
    <property type="term" value="F:ATP binding"/>
    <property type="evidence" value="ECO:0007669"/>
    <property type="project" value="UniProtKB-UniRule"/>
</dbReference>
<dbReference type="GO" id="GO:0016887">
    <property type="term" value="F:ATP hydrolysis activity"/>
    <property type="evidence" value="ECO:0007669"/>
    <property type="project" value="UniProtKB-UniRule"/>
</dbReference>
<dbReference type="GO" id="GO:0051301">
    <property type="term" value="P:cell division"/>
    <property type="evidence" value="ECO:0007669"/>
    <property type="project" value="UniProtKB-UniRule"/>
</dbReference>
<dbReference type="FunFam" id="3.40.50.300:FF:001274">
    <property type="entry name" value="Cell division protein ZapE"/>
    <property type="match status" value="1"/>
</dbReference>
<dbReference type="Gene3D" id="3.40.50.300">
    <property type="entry name" value="P-loop containing nucleotide triphosphate hydrolases"/>
    <property type="match status" value="1"/>
</dbReference>
<dbReference type="HAMAP" id="MF_01919">
    <property type="entry name" value="ZapE"/>
    <property type="match status" value="1"/>
</dbReference>
<dbReference type="InterPro" id="IPR005654">
    <property type="entry name" value="ATPase_AFG1-like"/>
</dbReference>
<dbReference type="InterPro" id="IPR027417">
    <property type="entry name" value="P-loop_NTPase"/>
</dbReference>
<dbReference type="InterPro" id="IPR030870">
    <property type="entry name" value="ZapE"/>
</dbReference>
<dbReference type="NCBIfam" id="NF040713">
    <property type="entry name" value="ZapE"/>
    <property type="match status" value="1"/>
</dbReference>
<dbReference type="PANTHER" id="PTHR12169:SF6">
    <property type="entry name" value="AFG1-LIKE ATPASE"/>
    <property type="match status" value="1"/>
</dbReference>
<dbReference type="PANTHER" id="PTHR12169">
    <property type="entry name" value="ATPASE N2B"/>
    <property type="match status" value="1"/>
</dbReference>
<dbReference type="Pfam" id="PF03969">
    <property type="entry name" value="AFG1_ATPase"/>
    <property type="match status" value="1"/>
</dbReference>
<dbReference type="SUPFAM" id="SSF52540">
    <property type="entry name" value="P-loop containing nucleoside triphosphate hydrolases"/>
    <property type="match status" value="1"/>
</dbReference>
<organism>
    <name type="scientific">Escherichia coli O157:H7</name>
    <dbReference type="NCBI Taxonomy" id="83334"/>
    <lineage>
        <taxon>Bacteria</taxon>
        <taxon>Pseudomonadati</taxon>
        <taxon>Pseudomonadota</taxon>
        <taxon>Gammaproteobacteria</taxon>
        <taxon>Enterobacterales</taxon>
        <taxon>Enterobacteriaceae</taxon>
        <taxon>Escherichia</taxon>
    </lineage>
</organism>
<comment type="function">
    <text evidence="1">Reduces the stability of FtsZ polymers in the presence of ATP.</text>
</comment>
<comment type="subunit">
    <text evidence="1">Interacts with FtsZ.</text>
</comment>
<comment type="subcellular location">
    <subcellularLocation>
        <location evidence="1">Cytoplasm</location>
    </subcellularLocation>
</comment>
<comment type="similarity">
    <text evidence="1">Belongs to the AFG1 ATPase family. ZapE subfamily.</text>
</comment>
<protein>
    <recommendedName>
        <fullName evidence="1">Cell division protein ZapE</fullName>
    </recommendedName>
    <alternativeName>
        <fullName evidence="1">Z ring-associated protein ZapE</fullName>
    </alternativeName>
</protein>